<accession>Q1CHD7</accession>
<accession>C4GUF7</accession>
<keyword id="KW-0119">Carbohydrate metabolism</keyword>
<keyword id="KW-0413">Isomerase</keyword>
<keyword id="KW-0880">Kelch repeat</keyword>
<keyword id="KW-0574">Periplasm</keyword>
<keyword id="KW-0677">Repeat</keyword>
<keyword id="KW-0732">Signal</keyword>
<evidence type="ECO:0000255" key="1">
    <source>
        <dbReference type="HAMAP-Rule" id="MF_01195"/>
    </source>
</evidence>
<organism>
    <name type="scientific">Yersinia pestis bv. Antiqua (strain Nepal516)</name>
    <dbReference type="NCBI Taxonomy" id="377628"/>
    <lineage>
        <taxon>Bacteria</taxon>
        <taxon>Pseudomonadati</taxon>
        <taxon>Pseudomonadota</taxon>
        <taxon>Gammaproteobacteria</taxon>
        <taxon>Enterobacterales</taxon>
        <taxon>Yersiniaceae</taxon>
        <taxon>Yersinia</taxon>
    </lineage>
</organism>
<feature type="signal peptide" evidence="1">
    <location>
        <begin position="1"/>
        <end position="35"/>
    </location>
</feature>
<feature type="chain" id="PRO_5000115411" description="N-acetylneuraminate epimerase">
    <location>
        <begin position="36"/>
        <end position="392"/>
    </location>
</feature>
<feature type="repeat" description="Kelch 1">
    <location>
        <begin position="56"/>
        <end position="100"/>
    </location>
</feature>
<feature type="repeat" description="Kelch 2">
    <location>
        <begin position="102"/>
        <end position="155"/>
    </location>
</feature>
<feature type="repeat" description="Kelch 3">
    <location>
        <begin position="157"/>
        <end position="192"/>
    </location>
</feature>
<feature type="repeat" description="Kelch 4">
    <location>
        <begin position="193"/>
        <end position="238"/>
    </location>
</feature>
<feature type="repeat" description="Kelch 5">
    <location>
        <begin position="241"/>
        <end position="290"/>
    </location>
</feature>
<feature type="repeat" description="Kelch 6">
    <location>
        <begin position="312"/>
        <end position="361"/>
    </location>
</feature>
<feature type="repeat" description="Kelch 7">
    <location>
        <begin position="363"/>
        <end position="392"/>
    </location>
</feature>
<feature type="active site" description="Proton acceptor" evidence="1">
    <location>
        <position position="247"/>
    </location>
</feature>
<protein>
    <recommendedName>
        <fullName evidence="1">N-acetylneuraminate epimerase</fullName>
        <ecNumber evidence="1">5.1.3.24</ecNumber>
    </recommendedName>
    <alternativeName>
        <fullName evidence="1">N-acetylneuraminate mutarotase</fullName>
        <shortName evidence="1">Neu5Ac mutarotase</shortName>
    </alternativeName>
    <alternativeName>
        <fullName evidence="1">Sialic acid epimerase</fullName>
    </alternativeName>
</protein>
<name>NANM_YERPN</name>
<reference key="1">
    <citation type="journal article" date="2006" name="J. Bacteriol.">
        <title>Complete genome sequence of Yersinia pestis strains Antiqua and Nepal516: evidence of gene reduction in an emerging pathogen.</title>
        <authorList>
            <person name="Chain P.S.G."/>
            <person name="Hu P."/>
            <person name="Malfatti S.A."/>
            <person name="Radnedge L."/>
            <person name="Larimer F."/>
            <person name="Vergez L.M."/>
            <person name="Worsham P."/>
            <person name="Chu M.C."/>
            <person name="Andersen G.L."/>
        </authorList>
    </citation>
    <scope>NUCLEOTIDE SEQUENCE [LARGE SCALE GENOMIC DNA]</scope>
    <source>
        <strain>Nepal516</strain>
    </source>
</reference>
<reference key="2">
    <citation type="submission" date="2009-04" db="EMBL/GenBank/DDBJ databases">
        <title>Yersinia pestis Nepal516A whole genome shotgun sequencing project.</title>
        <authorList>
            <person name="Plunkett G. III"/>
            <person name="Anderson B.D."/>
            <person name="Baumler D.J."/>
            <person name="Burland V."/>
            <person name="Cabot E.L."/>
            <person name="Glasner J.D."/>
            <person name="Mau B."/>
            <person name="Neeno-Eckwall E."/>
            <person name="Perna N.T."/>
            <person name="Munk A.C."/>
            <person name="Tapia R."/>
            <person name="Green L.D."/>
            <person name="Rogers Y.C."/>
            <person name="Detter J.C."/>
            <person name="Bruce D.C."/>
            <person name="Brettin T.S."/>
        </authorList>
    </citation>
    <scope>NUCLEOTIDE SEQUENCE [LARGE SCALE GENOMIC DNA]</scope>
    <source>
        <strain>Nepal516</strain>
    </source>
</reference>
<sequence>MTQLYPQYKKQLTTKIVLFSALSLLMMASLPNTYAEQYPDVPVPFKNGTGGKVENSLYVGLGSAGVSWFRLDTDKTGAGWQKVANFPGQPREQAVTVVLAGKLYVFGGVGKTNANDTQVRALDDAYRFDPQTNQWQQLATRAPRGLVGTVATTLDGSQAVLLGGVNKAIFDGYFTDLASAGSDEVRKSAVINAYFNQAPADYFYNRDVLIYDPQKNQWKSGGLLPFLGTAGSAISRMDNRLILINGEIKPGLRTAAVWQGLMQGNVLEWQPQPDLIGAETGSAQEGLAGAFSGISHKTVLVAGGANFPGAWKQFNRGHLYAHQGLEKQWHQQVYALVDNQWRIAGKLPQPLGYGVSIQGPDKVILIGGETTGGTATSAVTQLSWQGGKLHIE</sequence>
<gene>
    <name evidence="1" type="primary">nanM</name>
    <name type="ordered locus">YPN_2265</name>
    <name type="ORF">YP516_2546</name>
</gene>
<dbReference type="EC" id="5.1.3.24" evidence="1"/>
<dbReference type="EMBL" id="CP000305">
    <property type="protein sequence ID" value="ABG18593.1"/>
    <property type="molecule type" value="Genomic_DNA"/>
</dbReference>
<dbReference type="EMBL" id="ACNQ01000013">
    <property type="protein sequence ID" value="EEO76344.1"/>
    <property type="molecule type" value="Genomic_DNA"/>
</dbReference>
<dbReference type="RefSeq" id="WP_002211169.1">
    <property type="nucleotide sequence ID" value="NZ_ACNQ01000013.1"/>
</dbReference>
<dbReference type="SMR" id="Q1CHD7"/>
<dbReference type="KEGG" id="ypn:YPN_2265"/>
<dbReference type="HOGENOM" id="CLU_061535_0_0_6"/>
<dbReference type="Proteomes" id="UP000008936">
    <property type="component" value="Chromosome"/>
</dbReference>
<dbReference type="GO" id="GO:0042597">
    <property type="term" value="C:periplasmic space"/>
    <property type="evidence" value="ECO:0007669"/>
    <property type="project" value="UniProtKB-SubCell"/>
</dbReference>
<dbReference type="GO" id="GO:0016857">
    <property type="term" value="F:racemase and epimerase activity, acting on carbohydrates and derivatives"/>
    <property type="evidence" value="ECO:0007669"/>
    <property type="project" value="UniProtKB-UniRule"/>
</dbReference>
<dbReference type="Gene3D" id="2.120.10.80">
    <property type="entry name" value="Kelch-type beta propeller"/>
    <property type="match status" value="1"/>
</dbReference>
<dbReference type="HAMAP" id="MF_01195">
    <property type="entry name" value="NanM"/>
    <property type="match status" value="1"/>
</dbReference>
<dbReference type="InterPro" id="IPR015915">
    <property type="entry name" value="Kelch-typ_b-propeller"/>
</dbReference>
<dbReference type="InterPro" id="IPR056734">
    <property type="entry name" value="NANM"/>
</dbReference>
<dbReference type="InterPro" id="IPR019936">
    <property type="entry name" value="NanM_proteobact"/>
</dbReference>
<dbReference type="NCBIfam" id="TIGR03547">
    <property type="entry name" value="muta_rot_YjhT"/>
    <property type="match status" value="1"/>
</dbReference>
<dbReference type="NCBIfam" id="NF010730">
    <property type="entry name" value="PRK14131.1"/>
    <property type="match status" value="1"/>
</dbReference>
<dbReference type="PANTHER" id="PTHR24412">
    <property type="entry name" value="KELCH PROTEIN"/>
    <property type="match status" value="1"/>
</dbReference>
<dbReference type="PANTHER" id="PTHR24412:SF441">
    <property type="entry name" value="KELCH-LIKE PROTEIN 28"/>
    <property type="match status" value="1"/>
</dbReference>
<dbReference type="Pfam" id="PF24996">
    <property type="entry name" value="NANM"/>
    <property type="match status" value="1"/>
</dbReference>
<dbReference type="SUPFAM" id="SSF117281">
    <property type="entry name" value="Kelch motif"/>
    <property type="match status" value="1"/>
</dbReference>
<proteinExistence type="inferred from homology"/>
<comment type="function">
    <text evidence="1">Converts alpha-N-acetylneuranimic acid (Neu5Ac) to the beta-anomer, accelerating the equilibrium between the alpha- and beta-anomers. Probably facilitates sialidase-negative bacteria to compete successfully for limited amounts of extracellular Neu5Ac, which is likely taken up in the beta-anomer. In addition, the rapid removal of sialic acid from solution might be advantageous to the bacterium to damp down host responses.</text>
</comment>
<comment type="catalytic activity">
    <reaction evidence="1">
        <text>N-acetyl-alpha-neuraminate = N-acetyl-beta-neuraminate</text>
        <dbReference type="Rhea" id="RHEA:25233"/>
        <dbReference type="ChEBI" id="CHEBI:58705"/>
        <dbReference type="ChEBI" id="CHEBI:58770"/>
        <dbReference type="EC" id="5.1.3.24"/>
    </reaction>
</comment>
<comment type="subunit">
    <text evidence="1">Homodimer.</text>
</comment>
<comment type="subcellular location">
    <subcellularLocation>
        <location evidence="1">Periplasm</location>
    </subcellularLocation>
</comment>
<comment type="similarity">
    <text evidence="1">Belongs to the NanM family.</text>
</comment>